<comment type="function">
    <text evidence="1">RNA 2'-O-methyltransferase involved in the processing of the 34S pre-rRNA to 18S rRNA and in 40S ribosomal subunit formation.</text>
</comment>
<comment type="catalytic activity">
    <reaction evidence="1">
        <text>a ribonucleotide in rRNA + S-adenosyl-L-methionine = a 2'-O-methylribonucleotide in rRNA + S-adenosyl-L-homocysteine + H(+)</text>
        <dbReference type="Rhea" id="RHEA:48628"/>
        <dbReference type="Rhea" id="RHEA-COMP:12164"/>
        <dbReference type="Rhea" id="RHEA-COMP:12165"/>
        <dbReference type="ChEBI" id="CHEBI:15378"/>
        <dbReference type="ChEBI" id="CHEBI:57856"/>
        <dbReference type="ChEBI" id="CHEBI:59789"/>
        <dbReference type="ChEBI" id="CHEBI:90675"/>
        <dbReference type="ChEBI" id="CHEBI:90676"/>
    </reaction>
</comment>
<comment type="subunit">
    <text evidence="1">Interacts with NIP7.</text>
</comment>
<comment type="subcellular location">
    <subcellularLocation>
        <location evidence="1">Nucleus</location>
        <location evidence="1">Nucleolus</location>
    </subcellularLocation>
</comment>
<comment type="similarity">
    <text evidence="1">Belongs to the class I-like SAM-binding methyltransferase superfamily. RNA methyltransferase RlmE family. SPB1 subfamily.</text>
</comment>
<comment type="sequence caution" evidence="3">
    <conflict type="erroneous initiation">
        <sequence resource="EMBL-CDS" id="CAG31722"/>
    </conflict>
</comment>
<organism>
    <name type="scientific">Gallus gallus</name>
    <name type="common">Chicken</name>
    <dbReference type="NCBI Taxonomy" id="9031"/>
    <lineage>
        <taxon>Eukaryota</taxon>
        <taxon>Metazoa</taxon>
        <taxon>Chordata</taxon>
        <taxon>Craniata</taxon>
        <taxon>Vertebrata</taxon>
        <taxon>Euteleostomi</taxon>
        <taxon>Archelosauria</taxon>
        <taxon>Archosauria</taxon>
        <taxon>Dinosauria</taxon>
        <taxon>Saurischia</taxon>
        <taxon>Theropoda</taxon>
        <taxon>Coelurosauria</taxon>
        <taxon>Aves</taxon>
        <taxon>Neognathae</taxon>
        <taxon>Galloanserae</taxon>
        <taxon>Galliformes</taxon>
        <taxon>Phasianidae</taxon>
        <taxon>Phasianinae</taxon>
        <taxon>Gallus</taxon>
    </lineage>
</organism>
<reference key="1">
    <citation type="journal article" date="2005" name="Genome Biol.">
        <title>Full-length cDNAs from chicken bursal lymphocytes to facilitate gene function analysis.</title>
        <authorList>
            <person name="Caldwell R.B."/>
            <person name="Kierzek A.M."/>
            <person name="Arakawa H."/>
            <person name="Bezzubov Y."/>
            <person name="Zaim J."/>
            <person name="Fiedler P."/>
            <person name="Kutter S."/>
            <person name="Blagodatski A."/>
            <person name="Kostovska D."/>
            <person name="Koter M."/>
            <person name="Plachy J."/>
            <person name="Carninci P."/>
            <person name="Hayashizaki Y."/>
            <person name="Buerstedde J.-M."/>
        </authorList>
    </citation>
    <scope>NUCLEOTIDE SEQUENCE [LARGE SCALE MRNA]</scope>
    <source>
        <strain>CB</strain>
        <tissue>Bursa of Fabricius</tissue>
    </source>
</reference>
<reference key="2">
    <citation type="journal article" date="2004" name="Nature">
        <title>Sequence and comparative analysis of the chicken genome provide unique perspectives on vertebrate evolution.</title>
        <authorList>
            <person name="Hillier L.W."/>
            <person name="Miller W."/>
            <person name="Birney E."/>
            <person name="Warren W."/>
            <person name="Hardison R.C."/>
            <person name="Ponting C.P."/>
            <person name="Bork P."/>
            <person name="Burt D.W."/>
            <person name="Groenen M.A.M."/>
            <person name="Delany M.E."/>
            <person name="Dodgson J.B."/>
            <person name="Chinwalla A.T."/>
            <person name="Cliften P.F."/>
            <person name="Clifton S.W."/>
            <person name="Delehaunty K.D."/>
            <person name="Fronick C."/>
            <person name="Fulton R.S."/>
            <person name="Graves T.A."/>
            <person name="Kremitzki C."/>
            <person name="Layman D."/>
            <person name="Magrini V."/>
            <person name="McPherson J.D."/>
            <person name="Miner T.L."/>
            <person name="Minx P."/>
            <person name="Nash W.E."/>
            <person name="Nhan M.N."/>
            <person name="Nelson J.O."/>
            <person name="Oddy L.G."/>
            <person name="Pohl C.S."/>
            <person name="Randall-Maher J."/>
            <person name="Smith S.M."/>
            <person name="Wallis J.W."/>
            <person name="Yang S.-P."/>
            <person name="Romanov M.N."/>
            <person name="Rondelli C.M."/>
            <person name="Paton B."/>
            <person name="Smith J."/>
            <person name="Morrice D."/>
            <person name="Daniels L."/>
            <person name="Tempest H.G."/>
            <person name="Robertson L."/>
            <person name="Masabanda J.S."/>
            <person name="Griffin D.K."/>
            <person name="Vignal A."/>
            <person name="Fillon V."/>
            <person name="Jacobbson L."/>
            <person name="Kerje S."/>
            <person name="Andersson L."/>
            <person name="Crooijmans R.P."/>
            <person name="Aerts J."/>
            <person name="van der Poel J.J."/>
            <person name="Ellegren H."/>
            <person name="Caldwell R.B."/>
            <person name="Hubbard S.J."/>
            <person name="Grafham D.V."/>
            <person name="Kierzek A.M."/>
            <person name="McLaren S.R."/>
            <person name="Overton I.M."/>
            <person name="Arakawa H."/>
            <person name="Beattie K.J."/>
            <person name="Bezzubov Y."/>
            <person name="Boardman P.E."/>
            <person name="Bonfield J.K."/>
            <person name="Croning M.D.R."/>
            <person name="Davies R.M."/>
            <person name="Francis M.D."/>
            <person name="Humphray S.J."/>
            <person name="Scott C.E."/>
            <person name="Taylor R.G."/>
            <person name="Tickle C."/>
            <person name="Brown W.R.A."/>
            <person name="Rogers J."/>
            <person name="Buerstedde J.-M."/>
            <person name="Wilson S.A."/>
            <person name="Stubbs L."/>
            <person name="Ovcharenko I."/>
            <person name="Gordon L."/>
            <person name="Lucas S."/>
            <person name="Miller M.M."/>
            <person name="Inoko H."/>
            <person name="Shiina T."/>
            <person name="Kaufman J."/>
            <person name="Salomonsen J."/>
            <person name="Skjoedt K."/>
            <person name="Wong G.K.-S."/>
            <person name="Wang J."/>
            <person name="Liu B."/>
            <person name="Wang J."/>
            <person name="Yu J."/>
            <person name="Yang H."/>
            <person name="Nefedov M."/>
            <person name="Koriabine M."/>
            <person name="Dejong P.J."/>
            <person name="Goodstadt L."/>
            <person name="Webber C."/>
            <person name="Dickens N.J."/>
            <person name="Letunic I."/>
            <person name="Suyama M."/>
            <person name="Torrents D."/>
            <person name="von Mering C."/>
            <person name="Zdobnov E.M."/>
            <person name="Makova K."/>
            <person name="Nekrutenko A."/>
            <person name="Elnitski L."/>
            <person name="Eswara P."/>
            <person name="King D.C."/>
            <person name="Yang S.-P."/>
            <person name="Tyekucheva S."/>
            <person name="Radakrishnan A."/>
            <person name="Harris R.S."/>
            <person name="Chiaromonte F."/>
            <person name="Taylor J."/>
            <person name="He J."/>
            <person name="Rijnkels M."/>
            <person name="Griffiths-Jones S."/>
            <person name="Ureta-Vidal A."/>
            <person name="Hoffman M.M."/>
            <person name="Severin J."/>
            <person name="Searle S.M.J."/>
            <person name="Law A.S."/>
            <person name="Speed D."/>
            <person name="Waddington D."/>
            <person name="Cheng Z."/>
            <person name="Tuzun E."/>
            <person name="Eichler E."/>
            <person name="Bao Z."/>
            <person name="Flicek P."/>
            <person name="Shteynberg D.D."/>
            <person name="Brent M.R."/>
            <person name="Bye J.M."/>
            <person name="Huckle E.J."/>
            <person name="Chatterji S."/>
            <person name="Dewey C."/>
            <person name="Pachter L."/>
            <person name="Kouranov A."/>
            <person name="Mourelatos Z."/>
            <person name="Hatzigeorgiou A.G."/>
            <person name="Paterson A.H."/>
            <person name="Ivarie R."/>
            <person name="Brandstrom M."/>
            <person name="Axelsson E."/>
            <person name="Backstrom N."/>
            <person name="Berlin S."/>
            <person name="Webster M.T."/>
            <person name="Pourquie O."/>
            <person name="Reymond A."/>
            <person name="Ucla C."/>
            <person name="Antonarakis S.E."/>
            <person name="Long M."/>
            <person name="Emerson J.J."/>
            <person name="Betran E."/>
            <person name="Dupanloup I."/>
            <person name="Kaessmann H."/>
            <person name="Hinrichs A.S."/>
            <person name="Bejerano G."/>
            <person name="Furey T.S."/>
            <person name="Harte R.A."/>
            <person name="Raney B."/>
            <person name="Siepel A."/>
            <person name="Kent W.J."/>
            <person name="Haussler D."/>
            <person name="Eyras E."/>
            <person name="Castelo R."/>
            <person name="Abril J.F."/>
            <person name="Castellano S."/>
            <person name="Camara F."/>
            <person name="Parra G."/>
            <person name="Guigo R."/>
            <person name="Bourque G."/>
            <person name="Tesler G."/>
            <person name="Pevzner P.A."/>
            <person name="Smit A."/>
            <person name="Fulton L.A."/>
            <person name="Mardis E.R."/>
            <person name="Wilson R.K."/>
        </authorList>
    </citation>
    <scope>NUCLEOTIDE SEQUENCE [LARGE SCALE GENOMIC DNA]</scope>
    <source>
        <strain>Red jungle fowl</strain>
    </source>
</reference>
<proteinExistence type="evidence at transcript level"/>
<dbReference type="EC" id="2.1.1.-" evidence="1"/>
<dbReference type="EMBL" id="AJ720063">
    <property type="protein sequence ID" value="CAG31722.1"/>
    <property type="status" value="ALT_INIT"/>
    <property type="molecule type" value="mRNA"/>
</dbReference>
<dbReference type="EMBL" id="AADN02056696">
    <property type="status" value="NOT_ANNOTATED_CDS"/>
    <property type="molecule type" value="Genomic_DNA"/>
</dbReference>
<dbReference type="EMBL" id="AADN02061717">
    <property type="status" value="NOT_ANNOTATED_CDS"/>
    <property type="molecule type" value="Genomic_DNA"/>
</dbReference>
<dbReference type="EMBL" id="AADN02056695">
    <property type="status" value="NOT_ANNOTATED_CDS"/>
    <property type="molecule type" value="Genomic_DNA"/>
</dbReference>
<dbReference type="RefSeq" id="NP_001026096.2">
    <property type="nucleotide sequence ID" value="NM_001030925.2"/>
</dbReference>
<dbReference type="SMR" id="Q5ZKM1"/>
<dbReference type="FunCoup" id="Q5ZKM1">
    <property type="interactions" value="1727"/>
</dbReference>
<dbReference type="STRING" id="9031.ENSGALP00000054562"/>
<dbReference type="GlyGen" id="Q5ZKM1">
    <property type="glycosylation" value="1 site"/>
</dbReference>
<dbReference type="PaxDb" id="9031-ENSGALP00000039839"/>
<dbReference type="KEGG" id="gga:419943"/>
<dbReference type="VEuPathDB" id="HostDB:geneid_419943"/>
<dbReference type="eggNOG" id="KOG1098">
    <property type="taxonomic scope" value="Eukaryota"/>
</dbReference>
<dbReference type="InParanoid" id="Q5ZKM1"/>
<dbReference type="OrthoDB" id="289250at2759"/>
<dbReference type="PhylomeDB" id="Q5ZKM1"/>
<dbReference type="PRO" id="PR:Q5ZKM1"/>
<dbReference type="Proteomes" id="UP000000539">
    <property type="component" value="Unassembled WGS sequence"/>
</dbReference>
<dbReference type="GO" id="GO:0005730">
    <property type="term" value="C:nucleolus"/>
    <property type="evidence" value="ECO:0000318"/>
    <property type="project" value="GO_Central"/>
</dbReference>
<dbReference type="GO" id="GO:0030687">
    <property type="term" value="C:preribosome, large subunit precursor"/>
    <property type="evidence" value="ECO:0000318"/>
    <property type="project" value="GO_Central"/>
</dbReference>
<dbReference type="GO" id="GO:0030688">
    <property type="term" value="C:preribosome, small subunit precursor"/>
    <property type="evidence" value="ECO:0007669"/>
    <property type="project" value="UniProtKB-UniRule"/>
</dbReference>
<dbReference type="GO" id="GO:0062105">
    <property type="term" value="F:RNA 2'-O-methyltransferase activity"/>
    <property type="evidence" value="ECO:0000250"/>
    <property type="project" value="UniProtKB"/>
</dbReference>
<dbReference type="GO" id="GO:0016435">
    <property type="term" value="F:rRNA (guanine) methyltransferase activity"/>
    <property type="evidence" value="ECO:0000318"/>
    <property type="project" value="GO_Central"/>
</dbReference>
<dbReference type="GO" id="GO:0008650">
    <property type="term" value="F:rRNA (uridine-2'-O-)-methyltransferase activity"/>
    <property type="evidence" value="ECO:0000318"/>
    <property type="project" value="GO_Central"/>
</dbReference>
<dbReference type="GO" id="GO:0000466">
    <property type="term" value="P:maturation of 5.8S rRNA from tricistronic rRNA transcript (SSU-rRNA, 5.8S rRNA, LSU-rRNA)"/>
    <property type="evidence" value="ECO:0000318"/>
    <property type="project" value="GO_Central"/>
</dbReference>
<dbReference type="GO" id="GO:0000463">
    <property type="term" value="P:maturation of LSU-rRNA from tricistronic rRNA transcript (SSU-rRNA, 5.8S rRNA, LSU-rRNA)"/>
    <property type="evidence" value="ECO:0000318"/>
    <property type="project" value="GO_Central"/>
</dbReference>
<dbReference type="GO" id="GO:0001510">
    <property type="term" value="P:RNA methylation"/>
    <property type="evidence" value="ECO:0000250"/>
    <property type="project" value="UniProtKB"/>
</dbReference>
<dbReference type="GO" id="GO:0031167">
    <property type="term" value="P:rRNA methylation"/>
    <property type="evidence" value="ECO:0000318"/>
    <property type="project" value="GO_Central"/>
</dbReference>
<dbReference type="FunFam" id="3.40.50.150:FF:000004">
    <property type="entry name" value="AdoMet-dependent rRNA methyltransferase SPB1"/>
    <property type="match status" value="1"/>
</dbReference>
<dbReference type="Gene3D" id="3.40.50.150">
    <property type="entry name" value="Vaccinia Virus protein VP39"/>
    <property type="match status" value="1"/>
</dbReference>
<dbReference type="HAMAP" id="MF_01547">
    <property type="entry name" value="RNA_methyltr_E"/>
    <property type="match status" value="1"/>
</dbReference>
<dbReference type="HAMAP" id="MF_03163">
    <property type="entry name" value="RNA_methyltr_E_SPB1"/>
    <property type="match status" value="1"/>
</dbReference>
<dbReference type="InterPro" id="IPR050082">
    <property type="entry name" value="RNA_methyltr_RlmE"/>
</dbReference>
<dbReference type="InterPro" id="IPR002877">
    <property type="entry name" value="RNA_MeTrfase_FtsJ_dom"/>
</dbReference>
<dbReference type="InterPro" id="IPR015507">
    <property type="entry name" value="rRNA-MeTfrase_E"/>
</dbReference>
<dbReference type="InterPro" id="IPR012920">
    <property type="entry name" value="rRNA_MeTfrase_SPB1-like_C"/>
</dbReference>
<dbReference type="InterPro" id="IPR024576">
    <property type="entry name" value="rRNA_MeTfrase_Spb1_DUF3381"/>
</dbReference>
<dbReference type="InterPro" id="IPR029063">
    <property type="entry name" value="SAM-dependent_MTases_sf"/>
</dbReference>
<dbReference type="InterPro" id="IPR028589">
    <property type="entry name" value="SPB1-like"/>
</dbReference>
<dbReference type="PANTHER" id="PTHR10920:SF13">
    <property type="entry name" value="PRE-RRNA 2'-O-RIBOSE RNA METHYLTRANSFERASE FTSJ3"/>
    <property type="match status" value="1"/>
</dbReference>
<dbReference type="PANTHER" id="PTHR10920">
    <property type="entry name" value="RIBOSOMAL RNA METHYLTRANSFERASE"/>
    <property type="match status" value="1"/>
</dbReference>
<dbReference type="Pfam" id="PF11861">
    <property type="entry name" value="DUF3381"/>
    <property type="match status" value="1"/>
</dbReference>
<dbReference type="Pfam" id="PF01728">
    <property type="entry name" value="FtsJ"/>
    <property type="match status" value="1"/>
</dbReference>
<dbReference type="Pfam" id="PF07780">
    <property type="entry name" value="Spb1_C"/>
    <property type="match status" value="1"/>
</dbReference>
<dbReference type="SUPFAM" id="SSF53335">
    <property type="entry name" value="S-adenosyl-L-methionine-dependent methyltransferases"/>
    <property type="match status" value="1"/>
</dbReference>
<evidence type="ECO:0000255" key="1">
    <source>
        <dbReference type="HAMAP-Rule" id="MF_03163"/>
    </source>
</evidence>
<evidence type="ECO:0000256" key="2">
    <source>
        <dbReference type="SAM" id="MobiDB-lite"/>
    </source>
</evidence>
<evidence type="ECO:0000305" key="3"/>
<sequence length="832" mass="95006">MGKKSKVGKSRRDKFYHLAKETGFRSRSAFKLLQLNRKFQFLQKARALLDLCAAPGGWLQVASKFMPVSSLVIGVDLVPIKPIPNVVTLQEDITTEKCRQALRKELQTWKVDVVLNDGAPNVGASWVHDAYSQANLTLMALKLACEFLCKGGWFITKVFRSRDYQPLLWIFQQFFHKVQATKPQASRNESAEIFVVCQGYQAPDKIDSKFFDPKYAFKEVEVHAKSVSELVSKKKPKAEGYADGDTTLYHRFTLMDFLKAPNPVDFLSKANEITLGDGELENHSSTTEELRQCCKDIRVLGRKELRALLNWRTKLRRFLTKKLKEQAKELDINLSSGEEEEGREEEEKTSPKAAADEMVKEEEEEVELALAEMKAKELAELKRKKKKILKEQRKQRERVELKMDLPGVSIADDGDTSMFSLQTIQRTQLLNEVARGDMASADALLEMRPGDDDICVSDADDEDDVSLASDLDPEELVEIEARQRRLERERREQGVKRVKPKVEEEEEEEEEEENPLLVPLEEKSVLQERQTSLWFGKDAFAGIEDDADEDLELGQSQMLAERQRESQTGKTKKKGQKKKVPQESTAAEPQDAADTGADTAEAEAEQSSDDDSSSDEEGPPTPVGRKRGLVEPCGFEVVPIEDPVKKARVLDAEGLALGSVIATSKKAKRDLIDDSFNRYSFNEEEGELPEWFTEEEKQHRRKQIPLDKQTVEEYRQRWRQINARPIKKVAEAKARKKRRMLKKMEQMKKKAEAVVSTVDISEREKVAQLRRIYKKAGLGKEKRQVTYLVAKKGVGPRVRRPPGVKGQFKVVDSRLKKDVRAQKRKEQKKRRK</sequence>
<accession>Q5ZKM1</accession>
<gene>
    <name evidence="1" type="primary">FTSJ3</name>
    <name type="ORF">RCJMB04_10b6</name>
</gene>
<name>SPB1_CHICK</name>
<feature type="chain" id="PRO_0000155581" description="pre-rRNA 2'-O-ribose RNA methyltransferase FTSJ3">
    <location>
        <begin position="1"/>
        <end position="832"/>
    </location>
</feature>
<feature type="region of interest" description="Disordered" evidence="2">
    <location>
        <begin position="332"/>
        <end position="358"/>
    </location>
</feature>
<feature type="region of interest" description="Disordered" evidence="2">
    <location>
        <begin position="485"/>
        <end position="523"/>
    </location>
</feature>
<feature type="region of interest" description="Disordered" evidence="2">
    <location>
        <begin position="546"/>
        <end position="631"/>
    </location>
</feature>
<feature type="region of interest" description="Disordered" evidence="2">
    <location>
        <begin position="795"/>
        <end position="832"/>
    </location>
</feature>
<feature type="coiled-coil region" evidence="1">
    <location>
        <begin position="726"/>
        <end position="758"/>
    </location>
</feature>
<feature type="compositionally biased region" description="Basic and acidic residues" evidence="2">
    <location>
        <begin position="345"/>
        <end position="358"/>
    </location>
</feature>
<feature type="compositionally biased region" description="Basic and acidic residues" evidence="2">
    <location>
        <begin position="485"/>
        <end position="495"/>
    </location>
</feature>
<feature type="compositionally biased region" description="Acidic residues" evidence="2">
    <location>
        <begin position="503"/>
        <end position="514"/>
    </location>
</feature>
<feature type="compositionally biased region" description="Basic residues" evidence="2">
    <location>
        <begin position="570"/>
        <end position="579"/>
    </location>
</feature>
<feature type="compositionally biased region" description="Acidic residues" evidence="2">
    <location>
        <begin position="600"/>
        <end position="618"/>
    </location>
</feature>
<feature type="compositionally biased region" description="Basic and acidic residues" evidence="2">
    <location>
        <begin position="811"/>
        <end position="821"/>
    </location>
</feature>
<feature type="compositionally biased region" description="Basic residues" evidence="2">
    <location>
        <begin position="822"/>
        <end position="832"/>
    </location>
</feature>
<feature type="active site" description="Proton acceptor" evidence="1">
    <location>
        <position position="157"/>
    </location>
</feature>
<feature type="binding site" evidence="1">
    <location>
        <position position="56"/>
    </location>
    <ligand>
        <name>S-adenosyl-L-methionine</name>
        <dbReference type="ChEBI" id="CHEBI:59789"/>
    </ligand>
</feature>
<feature type="binding site" evidence="1">
    <location>
        <position position="58"/>
    </location>
    <ligand>
        <name>S-adenosyl-L-methionine</name>
        <dbReference type="ChEBI" id="CHEBI:59789"/>
    </ligand>
</feature>
<feature type="binding site" evidence="1">
    <location>
        <position position="76"/>
    </location>
    <ligand>
        <name>S-adenosyl-L-methionine</name>
        <dbReference type="ChEBI" id="CHEBI:59789"/>
    </ligand>
</feature>
<feature type="binding site" evidence="1">
    <location>
        <position position="92"/>
    </location>
    <ligand>
        <name>S-adenosyl-L-methionine</name>
        <dbReference type="ChEBI" id="CHEBI:59789"/>
    </ligand>
</feature>
<feature type="binding site" evidence="1">
    <location>
        <position position="117"/>
    </location>
    <ligand>
        <name>S-adenosyl-L-methionine</name>
        <dbReference type="ChEBI" id="CHEBI:59789"/>
    </ligand>
</feature>
<feature type="sequence conflict" description="In Ref. 1." evidence="3" ref="1">
    <original>M</original>
    <variation>V</variation>
    <location>
        <position position="1"/>
    </location>
</feature>
<keyword id="KW-0175">Coiled coil</keyword>
<keyword id="KW-0489">Methyltransferase</keyword>
<keyword id="KW-0539">Nucleus</keyword>
<keyword id="KW-1185">Reference proteome</keyword>
<keyword id="KW-0690">Ribosome biogenesis</keyword>
<keyword id="KW-0698">rRNA processing</keyword>
<keyword id="KW-0949">S-adenosyl-L-methionine</keyword>
<keyword id="KW-0808">Transferase</keyword>
<protein>
    <recommendedName>
        <fullName evidence="1">pre-rRNA 2'-O-ribose RNA methyltransferase FTSJ3</fullName>
        <ecNumber evidence="1">2.1.1.-</ecNumber>
    </recommendedName>
    <alternativeName>
        <fullName evidence="1">Protein ftsJ homolog 3</fullName>
    </alternativeName>
    <alternativeName>
        <fullName evidence="1">Putative rRNA methyltransferase 3</fullName>
    </alternativeName>
</protein>